<evidence type="ECO:0000255" key="1">
    <source>
        <dbReference type="HAMAP-Rule" id="MF_00275"/>
    </source>
</evidence>
<keyword id="KW-0997">Cell inner membrane</keyword>
<keyword id="KW-1003">Cell membrane</keyword>
<keyword id="KW-0406">Ion transport</keyword>
<keyword id="KW-0472">Membrane</keyword>
<keyword id="KW-0630">Potassium</keyword>
<keyword id="KW-0633">Potassium transport</keyword>
<keyword id="KW-1185">Reference proteome</keyword>
<keyword id="KW-0812">Transmembrane</keyword>
<keyword id="KW-1133">Transmembrane helix</keyword>
<keyword id="KW-0813">Transport</keyword>
<gene>
    <name evidence="1" type="primary">kdpA</name>
    <name type="ordered locus">glr0573</name>
</gene>
<name>KDPA_GLOVI</name>
<feature type="chain" id="PRO_0000166500" description="Potassium-transporting ATPase potassium-binding subunit">
    <location>
        <begin position="1"/>
        <end position="575"/>
    </location>
</feature>
<feature type="transmembrane region" description="Helical" evidence="1">
    <location>
        <begin position="3"/>
        <end position="23"/>
    </location>
</feature>
<feature type="transmembrane region" description="Helical" evidence="1">
    <location>
        <begin position="69"/>
        <end position="89"/>
    </location>
</feature>
<feature type="transmembrane region" description="Helical" evidence="1">
    <location>
        <begin position="136"/>
        <end position="156"/>
    </location>
</feature>
<feature type="transmembrane region" description="Helical" evidence="1">
    <location>
        <begin position="178"/>
        <end position="198"/>
    </location>
</feature>
<feature type="transmembrane region" description="Helical" evidence="1">
    <location>
        <begin position="266"/>
        <end position="286"/>
    </location>
</feature>
<feature type="transmembrane region" description="Helical" evidence="1">
    <location>
        <begin position="293"/>
        <end position="313"/>
    </location>
</feature>
<feature type="transmembrane region" description="Helical" evidence="1">
    <location>
        <begin position="340"/>
        <end position="360"/>
    </location>
</feature>
<feature type="transmembrane region" description="Helical" evidence="1">
    <location>
        <begin position="367"/>
        <end position="387"/>
    </location>
</feature>
<feature type="transmembrane region" description="Helical" evidence="1">
    <location>
        <begin position="391"/>
        <end position="411"/>
    </location>
</feature>
<feature type="transmembrane region" description="Helical" evidence="1">
    <location>
        <begin position="431"/>
        <end position="451"/>
    </location>
</feature>
<feature type="transmembrane region" description="Helical" evidence="1">
    <location>
        <begin position="498"/>
        <end position="518"/>
    </location>
</feature>
<feature type="transmembrane region" description="Helical" evidence="1">
    <location>
        <begin position="543"/>
        <end position="563"/>
    </location>
</feature>
<comment type="function">
    <text evidence="1">Part of the high-affinity ATP-driven potassium transport (or Kdp) system, which catalyzes the hydrolysis of ATP coupled with the electrogenic transport of potassium into the cytoplasm. This subunit binds the periplasmic potassium ions and delivers the ions to the membrane domain of KdpB through an intramembrane tunnel.</text>
</comment>
<comment type="subunit">
    <text evidence="1">The system is composed of three essential subunits: KdpA, KdpB and KdpC.</text>
</comment>
<comment type="subcellular location">
    <subcellularLocation>
        <location evidence="1">Cell inner membrane</location>
        <topology evidence="1">Multi-pass membrane protein</topology>
    </subcellularLocation>
</comment>
<comment type="similarity">
    <text evidence="1">Belongs to the KdpA family.</text>
</comment>
<accession>Q7NN41</accession>
<protein>
    <recommendedName>
        <fullName evidence="1">Potassium-transporting ATPase potassium-binding subunit</fullName>
    </recommendedName>
    <alternativeName>
        <fullName evidence="1">ATP phosphohydrolase [potassium-transporting] A chain</fullName>
    </alternativeName>
    <alternativeName>
        <fullName evidence="1">Potassium-binding and translocating subunit A</fullName>
    </alternativeName>
    <alternativeName>
        <fullName evidence="1">Potassium-translocating ATPase A chain</fullName>
    </alternativeName>
</protein>
<sequence>MAFEGVLQIVATLVLMVAIVPFFGTYMARVFQGESTWLDRVLGPIENLVYRLGGVRPELTMDWWSYARAVLASNAAMFVPVFAVLLLQGSLPLNPNGISGMSWDLALHTAISFLTNTNQQHYSGETGASHLAQMVCFQFLMFTSAATGLAVGIAFIRGLLGKPLGNFYVDLTRSVSRILMPISIAFAVVLLSQGVPQSLGGTTEAQLVDPYRTEQDGKREQVTAQKLVSGPFASMESIKELGENGGGSYGINSAHPYENPNPFTNLLEILLLLAVPTSLIYTFGVLANNKKQGWVLFGTIFVLFVGLVGVAALGEYWGNPTVNALLGSANPNFEGQEVRFGWAQSALFATATTGTMTGAVNAMHDSLTPLAGLVTLFNLCLQVIWGGQGTGIAYILVFLIIAVFLTGLMVGRTPEIFGRKLEKREVALASIIFLVHPVIILVPTAIALAIPGLAGNSNPGFHGLTQVVYEYASAAANNGSGFEGLGDATPWWNLSTSVVLLLGRYAPIVALLALAGGLQRKQPVPETPGTLRTDTVLFGSVTAGTILILGALTFFPVFALGPIAEWIANLAGKTL</sequence>
<reference key="1">
    <citation type="journal article" date="2003" name="DNA Res.">
        <title>Complete genome structure of Gloeobacter violaceus PCC 7421, a cyanobacterium that lacks thylakoids.</title>
        <authorList>
            <person name="Nakamura Y."/>
            <person name="Kaneko T."/>
            <person name="Sato S."/>
            <person name="Mimuro M."/>
            <person name="Miyashita H."/>
            <person name="Tsuchiya T."/>
            <person name="Sasamoto S."/>
            <person name="Watanabe A."/>
            <person name="Kawashima K."/>
            <person name="Kishida Y."/>
            <person name="Kiyokawa C."/>
            <person name="Kohara M."/>
            <person name="Matsumoto M."/>
            <person name="Matsuno A."/>
            <person name="Nakazaki N."/>
            <person name="Shimpo S."/>
            <person name="Takeuchi C."/>
            <person name="Yamada M."/>
            <person name="Tabata S."/>
        </authorList>
    </citation>
    <scope>NUCLEOTIDE SEQUENCE [LARGE SCALE GENOMIC DNA]</scope>
    <source>
        <strain>ATCC 29082 / PCC 7421</strain>
    </source>
</reference>
<dbReference type="EMBL" id="BA000045">
    <property type="protein sequence ID" value="BAC88514.1"/>
    <property type="molecule type" value="Genomic_DNA"/>
</dbReference>
<dbReference type="RefSeq" id="NP_923519.1">
    <property type="nucleotide sequence ID" value="NC_005125.1"/>
</dbReference>
<dbReference type="RefSeq" id="WP_011140576.1">
    <property type="nucleotide sequence ID" value="NC_005125.1"/>
</dbReference>
<dbReference type="SMR" id="Q7NN41"/>
<dbReference type="FunCoup" id="Q7NN41">
    <property type="interactions" value="28"/>
</dbReference>
<dbReference type="STRING" id="251221.gene:10758046"/>
<dbReference type="EnsemblBacteria" id="BAC88514">
    <property type="protein sequence ID" value="BAC88514"/>
    <property type="gene ID" value="BAC88514"/>
</dbReference>
<dbReference type="KEGG" id="gvi:glr0573"/>
<dbReference type="PATRIC" id="fig|251221.4.peg.581"/>
<dbReference type="eggNOG" id="COG2060">
    <property type="taxonomic scope" value="Bacteria"/>
</dbReference>
<dbReference type="HOGENOM" id="CLU_018614_3_0_3"/>
<dbReference type="InParanoid" id="Q7NN41"/>
<dbReference type="OrthoDB" id="9763796at2"/>
<dbReference type="PhylomeDB" id="Q7NN41"/>
<dbReference type="Proteomes" id="UP000000557">
    <property type="component" value="Chromosome"/>
</dbReference>
<dbReference type="GO" id="GO:0005886">
    <property type="term" value="C:plasma membrane"/>
    <property type="evidence" value="ECO:0000318"/>
    <property type="project" value="GO_Central"/>
</dbReference>
<dbReference type="GO" id="GO:0008556">
    <property type="term" value="F:P-type potassium transmembrane transporter activity"/>
    <property type="evidence" value="ECO:0000318"/>
    <property type="project" value="GO_Central"/>
</dbReference>
<dbReference type="GO" id="GO:0030955">
    <property type="term" value="F:potassium ion binding"/>
    <property type="evidence" value="ECO:0007669"/>
    <property type="project" value="UniProtKB-UniRule"/>
</dbReference>
<dbReference type="GO" id="GO:0071805">
    <property type="term" value="P:potassium ion transmembrane transport"/>
    <property type="evidence" value="ECO:0000318"/>
    <property type="project" value="GO_Central"/>
</dbReference>
<dbReference type="HAMAP" id="MF_00275">
    <property type="entry name" value="KdpA"/>
    <property type="match status" value="1"/>
</dbReference>
<dbReference type="InterPro" id="IPR023298">
    <property type="entry name" value="ATPase_P-typ_TM_dom_sf"/>
</dbReference>
<dbReference type="InterPro" id="IPR004623">
    <property type="entry name" value="KdpA"/>
</dbReference>
<dbReference type="NCBIfam" id="TIGR00680">
    <property type="entry name" value="kdpA"/>
    <property type="match status" value="1"/>
</dbReference>
<dbReference type="PANTHER" id="PTHR30607">
    <property type="entry name" value="POTASSIUM-TRANSPORTING ATPASE A CHAIN"/>
    <property type="match status" value="1"/>
</dbReference>
<dbReference type="PANTHER" id="PTHR30607:SF2">
    <property type="entry name" value="POTASSIUM-TRANSPORTING ATPASE POTASSIUM-BINDING SUBUNIT"/>
    <property type="match status" value="1"/>
</dbReference>
<dbReference type="Pfam" id="PF03814">
    <property type="entry name" value="KdpA"/>
    <property type="match status" value="1"/>
</dbReference>
<dbReference type="PIRSF" id="PIRSF001294">
    <property type="entry name" value="K_ATPaseA"/>
    <property type="match status" value="1"/>
</dbReference>
<dbReference type="SUPFAM" id="SSF81665">
    <property type="entry name" value="Calcium ATPase, transmembrane domain M"/>
    <property type="match status" value="1"/>
</dbReference>
<organism>
    <name type="scientific">Gloeobacter violaceus (strain ATCC 29082 / PCC 7421)</name>
    <dbReference type="NCBI Taxonomy" id="251221"/>
    <lineage>
        <taxon>Bacteria</taxon>
        <taxon>Bacillati</taxon>
        <taxon>Cyanobacteriota</taxon>
        <taxon>Cyanophyceae</taxon>
        <taxon>Gloeobacterales</taxon>
        <taxon>Gloeobacteraceae</taxon>
        <taxon>Gloeobacter</taxon>
    </lineage>
</organism>
<proteinExistence type="inferred from homology"/>